<keyword id="KW-0963">Cytoplasm</keyword>
<keyword id="KW-1185">Reference proteome</keyword>
<keyword id="KW-0694">RNA-binding</keyword>
<name>SSRP_NITEU</name>
<sequence>MSIVQNKKAFHDYFIEEKYEAGIVLEGWEVKAIRAGRAQLKEAYILIRKGELFLIGSHISPLATASTHVNPDPVKTRKLLLHASQIRELIGKVERAGYTLIPLDMHYKSGRIKLEIGLARGKKQYDKRETEKRKEWERDKQRLLRIRRSSD</sequence>
<protein>
    <recommendedName>
        <fullName evidence="1">SsrA-binding protein</fullName>
    </recommendedName>
    <alternativeName>
        <fullName evidence="1">Small protein B</fullName>
    </alternativeName>
</protein>
<organism>
    <name type="scientific">Nitrosomonas europaea (strain ATCC 19718 / CIP 103999 / KCTC 2705 / NBRC 14298)</name>
    <dbReference type="NCBI Taxonomy" id="228410"/>
    <lineage>
        <taxon>Bacteria</taxon>
        <taxon>Pseudomonadati</taxon>
        <taxon>Pseudomonadota</taxon>
        <taxon>Betaproteobacteria</taxon>
        <taxon>Nitrosomonadales</taxon>
        <taxon>Nitrosomonadaceae</taxon>
        <taxon>Nitrosomonas</taxon>
    </lineage>
</organism>
<accession>Q82X65</accession>
<comment type="function">
    <text evidence="1">Required for rescue of stalled ribosomes mediated by trans-translation. Binds to transfer-messenger RNA (tmRNA), required for stable association of tmRNA with ribosomes. tmRNA and SmpB together mimic tRNA shape, replacing the anticodon stem-loop with SmpB. tmRNA is encoded by the ssrA gene; the 2 termini fold to resemble tRNA(Ala) and it encodes a 'tag peptide', a short internal open reading frame. During trans-translation Ala-aminoacylated tmRNA acts like a tRNA, entering the A-site of stalled ribosomes, displacing the stalled mRNA. The ribosome then switches to translate the ORF on the tmRNA; the nascent peptide is terminated with the 'tag peptide' encoded by the tmRNA and targeted for degradation. The ribosome is freed to recommence translation, which seems to be the essential function of trans-translation.</text>
</comment>
<comment type="subcellular location">
    <subcellularLocation>
        <location evidence="1">Cytoplasm</location>
    </subcellularLocation>
    <text evidence="1">The tmRNA-SmpB complex associates with stalled 70S ribosomes.</text>
</comment>
<comment type="similarity">
    <text evidence="1">Belongs to the SmpB family.</text>
</comment>
<feature type="chain" id="PRO_0000102995" description="SsrA-binding protein">
    <location>
        <begin position="1"/>
        <end position="151"/>
    </location>
</feature>
<reference key="1">
    <citation type="journal article" date="2003" name="J. Bacteriol.">
        <title>Complete genome sequence of the ammonia-oxidizing bacterium and obligate chemolithoautotroph Nitrosomonas europaea.</title>
        <authorList>
            <person name="Chain P."/>
            <person name="Lamerdin J.E."/>
            <person name="Larimer F.W."/>
            <person name="Regala W."/>
            <person name="Lao V."/>
            <person name="Land M.L."/>
            <person name="Hauser L."/>
            <person name="Hooper A.B."/>
            <person name="Klotz M.G."/>
            <person name="Norton J."/>
            <person name="Sayavedra-Soto L.A."/>
            <person name="Arciero D.M."/>
            <person name="Hommes N.G."/>
            <person name="Whittaker M.M."/>
            <person name="Arp D.J."/>
        </authorList>
    </citation>
    <scope>NUCLEOTIDE SEQUENCE [LARGE SCALE GENOMIC DNA]</scope>
    <source>
        <strain>ATCC 19718 / CIP 103999 / KCTC 2705 / NBRC 14298</strain>
    </source>
</reference>
<evidence type="ECO:0000255" key="1">
    <source>
        <dbReference type="HAMAP-Rule" id="MF_00023"/>
    </source>
</evidence>
<gene>
    <name evidence="1" type="primary">smpB</name>
    <name type="ordered locus">NE0430</name>
</gene>
<proteinExistence type="inferred from homology"/>
<dbReference type="EMBL" id="AL954747">
    <property type="protein sequence ID" value="CAD84341.1"/>
    <property type="molecule type" value="Genomic_DNA"/>
</dbReference>
<dbReference type="RefSeq" id="WP_011111065.1">
    <property type="nucleotide sequence ID" value="NC_004757.1"/>
</dbReference>
<dbReference type="SMR" id="Q82X65"/>
<dbReference type="STRING" id="228410.NE0430"/>
<dbReference type="GeneID" id="87103638"/>
<dbReference type="KEGG" id="neu:NE0430"/>
<dbReference type="eggNOG" id="COG0691">
    <property type="taxonomic scope" value="Bacteria"/>
</dbReference>
<dbReference type="HOGENOM" id="CLU_108953_3_0_4"/>
<dbReference type="OrthoDB" id="9805462at2"/>
<dbReference type="PhylomeDB" id="Q82X65"/>
<dbReference type="Proteomes" id="UP000001416">
    <property type="component" value="Chromosome"/>
</dbReference>
<dbReference type="GO" id="GO:0005829">
    <property type="term" value="C:cytosol"/>
    <property type="evidence" value="ECO:0007669"/>
    <property type="project" value="TreeGrafter"/>
</dbReference>
<dbReference type="GO" id="GO:0003723">
    <property type="term" value="F:RNA binding"/>
    <property type="evidence" value="ECO:0007669"/>
    <property type="project" value="UniProtKB-UniRule"/>
</dbReference>
<dbReference type="GO" id="GO:0070929">
    <property type="term" value="P:trans-translation"/>
    <property type="evidence" value="ECO:0007669"/>
    <property type="project" value="UniProtKB-UniRule"/>
</dbReference>
<dbReference type="CDD" id="cd09294">
    <property type="entry name" value="SmpB"/>
    <property type="match status" value="1"/>
</dbReference>
<dbReference type="Gene3D" id="2.40.280.10">
    <property type="match status" value="1"/>
</dbReference>
<dbReference type="HAMAP" id="MF_00023">
    <property type="entry name" value="SmpB"/>
    <property type="match status" value="1"/>
</dbReference>
<dbReference type="InterPro" id="IPR023620">
    <property type="entry name" value="SmpB"/>
</dbReference>
<dbReference type="InterPro" id="IPR000037">
    <property type="entry name" value="SsrA-bd_prot"/>
</dbReference>
<dbReference type="InterPro" id="IPR020081">
    <property type="entry name" value="SsrA-bd_prot_CS"/>
</dbReference>
<dbReference type="NCBIfam" id="NF003843">
    <property type="entry name" value="PRK05422.1"/>
    <property type="match status" value="1"/>
</dbReference>
<dbReference type="NCBIfam" id="TIGR00086">
    <property type="entry name" value="smpB"/>
    <property type="match status" value="1"/>
</dbReference>
<dbReference type="PANTHER" id="PTHR30308:SF2">
    <property type="entry name" value="SSRA-BINDING PROTEIN"/>
    <property type="match status" value="1"/>
</dbReference>
<dbReference type="PANTHER" id="PTHR30308">
    <property type="entry name" value="TMRNA-BINDING COMPONENT OF TRANS-TRANSLATION TAGGING COMPLEX"/>
    <property type="match status" value="1"/>
</dbReference>
<dbReference type="Pfam" id="PF01668">
    <property type="entry name" value="SmpB"/>
    <property type="match status" value="1"/>
</dbReference>
<dbReference type="SUPFAM" id="SSF74982">
    <property type="entry name" value="Small protein B (SmpB)"/>
    <property type="match status" value="1"/>
</dbReference>
<dbReference type="PROSITE" id="PS01317">
    <property type="entry name" value="SSRP"/>
    <property type="match status" value="1"/>
</dbReference>